<sequence>MTAESTRKASIERSTKETSIAVSVDLDGVGKFDITTGVGFFDHMLEQLSRHSLIDMRVMAKGDLHIDDHHTVEDTGIALGQAVAKALGERRGIVRYASLDLAMDDTLTGAAVDVSGRAFLVWNVNFTTAKIGTFDTELVREFFQAFAMNAGITLHINNHYGANNHHIAESTFKAVARVLRAALETDPRQKDAIPSTKGSLKG</sequence>
<keyword id="KW-0028">Amino-acid biosynthesis</keyword>
<keyword id="KW-0963">Cytoplasm</keyword>
<keyword id="KW-0368">Histidine biosynthesis</keyword>
<keyword id="KW-0456">Lyase</keyword>
<protein>
    <recommendedName>
        <fullName evidence="1">Imidazoleglycerol-phosphate dehydratase</fullName>
        <shortName evidence="1">IGPD</shortName>
        <ecNumber evidence="1">4.2.1.19</ecNumber>
    </recommendedName>
</protein>
<comment type="catalytic activity">
    <reaction evidence="1">
        <text>D-erythro-1-(imidazol-4-yl)glycerol 3-phosphate = 3-(imidazol-4-yl)-2-oxopropyl phosphate + H2O</text>
        <dbReference type="Rhea" id="RHEA:11040"/>
        <dbReference type="ChEBI" id="CHEBI:15377"/>
        <dbReference type="ChEBI" id="CHEBI:57766"/>
        <dbReference type="ChEBI" id="CHEBI:58278"/>
        <dbReference type="EC" id="4.2.1.19"/>
    </reaction>
</comment>
<comment type="pathway">
    <text evidence="1">Amino-acid biosynthesis; L-histidine biosynthesis; L-histidine from 5-phospho-alpha-D-ribose 1-diphosphate: step 6/9.</text>
</comment>
<comment type="subcellular location">
    <subcellularLocation>
        <location evidence="1">Cytoplasm</location>
    </subcellularLocation>
</comment>
<comment type="similarity">
    <text evidence="1">Belongs to the imidazoleglycerol-phosphate dehydratase family.</text>
</comment>
<organism>
    <name type="scientific">Brucella ovis (strain ATCC 25840 / 63/290 / NCTC 10512)</name>
    <dbReference type="NCBI Taxonomy" id="444178"/>
    <lineage>
        <taxon>Bacteria</taxon>
        <taxon>Pseudomonadati</taxon>
        <taxon>Pseudomonadota</taxon>
        <taxon>Alphaproteobacteria</taxon>
        <taxon>Hyphomicrobiales</taxon>
        <taxon>Brucellaceae</taxon>
        <taxon>Brucella/Ochrobactrum group</taxon>
        <taxon>Brucella</taxon>
    </lineage>
</organism>
<reference key="1">
    <citation type="journal article" date="2009" name="PLoS ONE">
        <title>Genome degradation in Brucella ovis corresponds with narrowing of its host range and tissue tropism.</title>
        <authorList>
            <person name="Tsolis R.M."/>
            <person name="Seshadri R."/>
            <person name="Santos R.L."/>
            <person name="Sangari F.J."/>
            <person name="Lobo J.M."/>
            <person name="de Jong M.F."/>
            <person name="Ren Q."/>
            <person name="Myers G."/>
            <person name="Brinkac L.M."/>
            <person name="Nelson W.C."/>
            <person name="Deboy R.T."/>
            <person name="Angiuoli S."/>
            <person name="Khouri H."/>
            <person name="Dimitrov G."/>
            <person name="Robinson J.R."/>
            <person name="Mulligan S."/>
            <person name="Walker R.L."/>
            <person name="Elzer P.E."/>
            <person name="Hassan K.A."/>
            <person name="Paulsen I.T."/>
        </authorList>
    </citation>
    <scope>NUCLEOTIDE SEQUENCE [LARGE SCALE GENOMIC DNA]</scope>
    <source>
        <strain>ATCC 25840 / 63/290 / NCTC 10512</strain>
    </source>
</reference>
<dbReference type="EC" id="4.2.1.19" evidence="1"/>
<dbReference type="EMBL" id="CP000708">
    <property type="protein sequence ID" value="ABQ60091.1"/>
    <property type="molecule type" value="Genomic_DNA"/>
</dbReference>
<dbReference type="RefSeq" id="WP_002967034.1">
    <property type="nucleotide sequence ID" value="NC_009505.1"/>
</dbReference>
<dbReference type="SMR" id="A5VT39"/>
<dbReference type="GeneID" id="97534656"/>
<dbReference type="KEGG" id="bov:BOV_2001"/>
<dbReference type="HOGENOM" id="CLU_044308_3_0_5"/>
<dbReference type="PhylomeDB" id="A5VT39"/>
<dbReference type="UniPathway" id="UPA00031">
    <property type="reaction ID" value="UER00011"/>
</dbReference>
<dbReference type="Proteomes" id="UP000006383">
    <property type="component" value="Chromosome I"/>
</dbReference>
<dbReference type="GO" id="GO:0005737">
    <property type="term" value="C:cytoplasm"/>
    <property type="evidence" value="ECO:0007669"/>
    <property type="project" value="UniProtKB-SubCell"/>
</dbReference>
<dbReference type="GO" id="GO:0004424">
    <property type="term" value="F:imidazoleglycerol-phosphate dehydratase activity"/>
    <property type="evidence" value="ECO:0007669"/>
    <property type="project" value="UniProtKB-UniRule"/>
</dbReference>
<dbReference type="GO" id="GO:0000105">
    <property type="term" value="P:L-histidine biosynthetic process"/>
    <property type="evidence" value="ECO:0007669"/>
    <property type="project" value="UniProtKB-UniRule"/>
</dbReference>
<dbReference type="CDD" id="cd07914">
    <property type="entry name" value="IGPD"/>
    <property type="match status" value="1"/>
</dbReference>
<dbReference type="FunFam" id="3.30.230.40:FF:000001">
    <property type="entry name" value="Imidazoleglycerol-phosphate dehydratase HisB"/>
    <property type="match status" value="1"/>
</dbReference>
<dbReference type="FunFam" id="3.30.230.40:FF:000003">
    <property type="entry name" value="Imidazoleglycerol-phosphate dehydratase HisB"/>
    <property type="match status" value="1"/>
</dbReference>
<dbReference type="Gene3D" id="3.30.230.40">
    <property type="entry name" value="Imidazole glycerol phosphate dehydratase, domain 1"/>
    <property type="match status" value="2"/>
</dbReference>
<dbReference type="HAMAP" id="MF_00076">
    <property type="entry name" value="HisB"/>
    <property type="match status" value="1"/>
</dbReference>
<dbReference type="InterPro" id="IPR038494">
    <property type="entry name" value="IGPD_sf"/>
</dbReference>
<dbReference type="InterPro" id="IPR000807">
    <property type="entry name" value="ImidazoleglycerolP_deHydtase"/>
</dbReference>
<dbReference type="InterPro" id="IPR020565">
    <property type="entry name" value="ImidazoleglycerP_deHydtase_CS"/>
</dbReference>
<dbReference type="InterPro" id="IPR020568">
    <property type="entry name" value="Ribosomal_Su5_D2-typ_SF"/>
</dbReference>
<dbReference type="NCBIfam" id="NF002109">
    <property type="entry name" value="PRK00951.1-5"/>
    <property type="match status" value="1"/>
</dbReference>
<dbReference type="NCBIfam" id="NF002111">
    <property type="entry name" value="PRK00951.2-1"/>
    <property type="match status" value="1"/>
</dbReference>
<dbReference type="NCBIfam" id="NF002114">
    <property type="entry name" value="PRK00951.2-4"/>
    <property type="match status" value="1"/>
</dbReference>
<dbReference type="PANTHER" id="PTHR23133:SF2">
    <property type="entry name" value="IMIDAZOLEGLYCEROL-PHOSPHATE DEHYDRATASE"/>
    <property type="match status" value="1"/>
</dbReference>
<dbReference type="PANTHER" id="PTHR23133">
    <property type="entry name" value="IMIDAZOLEGLYCEROL-PHOSPHATE DEHYDRATASE HIS7"/>
    <property type="match status" value="1"/>
</dbReference>
<dbReference type="Pfam" id="PF00475">
    <property type="entry name" value="IGPD"/>
    <property type="match status" value="1"/>
</dbReference>
<dbReference type="SUPFAM" id="SSF54211">
    <property type="entry name" value="Ribosomal protein S5 domain 2-like"/>
    <property type="match status" value="2"/>
</dbReference>
<dbReference type="PROSITE" id="PS00954">
    <property type="entry name" value="IGP_DEHYDRATASE_1"/>
    <property type="match status" value="1"/>
</dbReference>
<dbReference type="PROSITE" id="PS00955">
    <property type="entry name" value="IGP_DEHYDRATASE_2"/>
    <property type="match status" value="1"/>
</dbReference>
<name>HIS7_BRUO2</name>
<evidence type="ECO:0000255" key="1">
    <source>
        <dbReference type="HAMAP-Rule" id="MF_00076"/>
    </source>
</evidence>
<proteinExistence type="inferred from homology"/>
<gene>
    <name evidence="1" type="primary">hisB</name>
    <name type="ordered locus">BOV_2001</name>
</gene>
<feature type="chain" id="PRO_1000010251" description="Imidazoleglycerol-phosphate dehydratase">
    <location>
        <begin position="1"/>
        <end position="202"/>
    </location>
</feature>
<accession>A5VT39</accession>